<organism>
    <name type="scientific">Podospora anserina (strain S / ATCC MYA-4624 / DSM 980 / FGSC 10383)</name>
    <name type="common">Pleurage anserina</name>
    <dbReference type="NCBI Taxonomy" id="515849"/>
    <lineage>
        <taxon>Eukaryota</taxon>
        <taxon>Fungi</taxon>
        <taxon>Dikarya</taxon>
        <taxon>Ascomycota</taxon>
        <taxon>Pezizomycotina</taxon>
        <taxon>Sordariomycetes</taxon>
        <taxon>Sordariomycetidae</taxon>
        <taxon>Sordariales</taxon>
        <taxon>Podosporaceae</taxon>
        <taxon>Podospora</taxon>
        <taxon>Podospora anserina</taxon>
    </lineage>
</organism>
<sequence length="593" mass="66914">MAYDYALVHLKYTIPLAALLTVIAYPIFHRIHFLQIGSLIVVSFLATLPWDSYLIRSNIWTYPPDAIIGPRLYGIPIEELFFFVIQTYITSLFYILLSKPLFHPLYLSTQRNPPQRIARGKVIGQGILVALTLYGVHQIRTGGPGTYLGLILAWAFPFALLTFTVAGRFILTLPLTSTVVPIIIPTVYLWLVDELALGRGTWAIESGTKLGWCLFGVLDIEEATFFLATNILIVFGMAVFDQYLAIIFAFPHLFPKVPRSPTPLMLVQSRFSNTKQYDLERIAGLSDAVTRLKAKSRSFYLANSLFTGRLRIDLILLYSFCRLADDLVDDSTSRTEVKSWTTKLYKFLDLHYKSDVKANKARINDYIDEAFPPEAKSALKYLPATILPSQPLYQLIEGFELDSQFSFHDSSESAKYPIVDEDKLNYYGQCVAGTVGELCVALIIEHCEPEMPDERKKMLMSVSRTMGVALQYVNIARDIVVDAEMGRVYLPTTWLKEEGLTPEDVVAHPRGKHVENLRRRLLSEAFKLYDEARPKMNGIPKEARGPMIGAVETYMEIGRVLRELEGGVELERGKATVPGGRRLKTVLKALFSA</sequence>
<accession>B2ATB0</accession>
<accession>A0A090CF73</accession>
<feature type="chain" id="PRO_0000409241" description="Bifunctional lycopene cyclase/phytoene synthase">
    <location>
        <begin position="1"/>
        <end position="593"/>
    </location>
</feature>
<feature type="transmembrane region" description="Helical" evidence="2">
    <location>
        <begin position="8"/>
        <end position="28"/>
    </location>
</feature>
<feature type="transmembrane region" description="Helical" evidence="2">
    <location>
        <begin position="31"/>
        <end position="51"/>
    </location>
</feature>
<feature type="transmembrane region" description="Helical" evidence="2">
    <location>
        <begin position="77"/>
        <end position="97"/>
    </location>
</feature>
<feature type="transmembrane region" description="Helical" evidence="2">
    <location>
        <begin position="117"/>
        <end position="136"/>
    </location>
</feature>
<feature type="transmembrane region" description="Helical" evidence="2">
    <location>
        <begin position="147"/>
        <end position="167"/>
    </location>
</feature>
<feature type="transmembrane region" description="Helical" evidence="2">
    <location>
        <begin position="169"/>
        <end position="189"/>
    </location>
</feature>
<feature type="transmembrane region" description="Helical" evidence="2">
    <location>
        <begin position="231"/>
        <end position="251"/>
    </location>
</feature>
<feature type="region of interest" description="Lycopene beta-cyclase" evidence="1">
    <location>
        <begin position="1"/>
        <end position="242"/>
    </location>
</feature>
<feature type="region of interest" description="Phytoene synthase" evidence="1">
    <location>
        <begin position="249"/>
        <end position="593"/>
    </location>
</feature>
<keyword id="KW-0125">Carotenoid biosynthesis</keyword>
<keyword id="KW-0413">Isomerase</keyword>
<keyword id="KW-0472">Membrane</keyword>
<keyword id="KW-0511">Multifunctional enzyme</keyword>
<keyword id="KW-1185">Reference proteome</keyword>
<keyword id="KW-0808">Transferase</keyword>
<keyword id="KW-0812">Transmembrane</keyword>
<keyword id="KW-1133">Transmembrane helix</keyword>
<evidence type="ECO:0000250" key="1">
    <source>
        <dbReference type="UniProtKB" id="P37295"/>
    </source>
</evidence>
<evidence type="ECO:0000255" key="2"/>
<evidence type="ECO:0000305" key="3"/>
<gene>
    <name type="ordered locus">Pa_1_15240</name>
    <name type="ORF">PODANS_1_15240</name>
</gene>
<proteinExistence type="inferred from homology"/>
<reference key="1">
    <citation type="journal article" date="2008" name="Genome Biol.">
        <title>The genome sequence of the model ascomycete fungus Podospora anserina.</title>
        <authorList>
            <person name="Espagne E."/>
            <person name="Lespinet O."/>
            <person name="Malagnac F."/>
            <person name="Da Silva C."/>
            <person name="Jaillon O."/>
            <person name="Porcel B.M."/>
            <person name="Couloux A."/>
            <person name="Aury J.-M."/>
            <person name="Segurens B."/>
            <person name="Poulain J."/>
            <person name="Anthouard V."/>
            <person name="Grossetete S."/>
            <person name="Khalili H."/>
            <person name="Coppin E."/>
            <person name="Dequard-Chablat M."/>
            <person name="Picard M."/>
            <person name="Contamine V."/>
            <person name="Arnaise S."/>
            <person name="Bourdais A."/>
            <person name="Berteaux-Lecellier V."/>
            <person name="Gautheret D."/>
            <person name="de Vries R.P."/>
            <person name="Battaglia E."/>
            <person name="Coutinho P.M."/>
            <person name="Danchin E.G.J."/>
            <person name="Henrissat B."/>
            <person name="El Khoury R."/>
            <person name="Sainsard-Chanet A."/>
            <person name="Boivin A."/>
            <person name="Pinan-Lucarre B."/>
            <person name="Sellem C.H."/>
            <person name="Debuchy R."/>
            <person name="Wincker P."/>
            <person name="Weissenbach J."/>
            <person name="Silar P."/>
        </authorList>
    </citation>
    <scope>NUCLEOTIDE SEQUENCE [LARGE SCALE GENOMIC DNA]</scope>
    <source>
        <strain>S / ATCC MYA-4624 / DSM 980 / FGSC 10383</strain>
    </source>
</reference>
<reference key="2">
    <citation type="journal article" date="2014" name="Genetics">
        <title>Maintaining two mating types: Structure of the mating type locus and its role in heterokaryosis in Podospora anserina.</title>
        <authorList>
            <person name="Grognet P."/>
            <person name="Bidard F."/>
            <person name="Kuchly C."/>
            <person name="Tong L.C.H."/>
            <person name="Coppin E."/>
            <person name="Benkhali J.A."/>
            <person name="Couloux A."/>
            <person name="Wincker P."/>
            <person name="Debuchy R."/>
            <person name="Silar P."/>
        </authorList>
    </citation>
    <scope>GENOME REANNOTATION</scope>
    <source>
        <strain>S / ATCC MYA-4624 / DSM 980 / FGSC 10383</strain>
    </source>
</reference>
<comment type="function">
    <text evidence="1">Bifunctional enzyme that catalyzes the reactions from geranylgeranyl diphosphate to phytoene (phytoene synthase) and lycopene to beta-carotene via the intermediate gamma-carotene (lycopene cyclase).</text>
</comment>
<comment type="catalytic activity">
    <reaction evidence="1">
        <text>all-trans-lycopene = gamma-carotene</text>
        <dbReference type="Rhea" id="RHEA:32219"/>
        <dbReference type="ChEBI" id="CHEBI:15948"/>
        <dbReference type="ChEBI" id="CHEBI:27740"/>
        <dbReference type="EC" id="5.5.1.19"/>
    </reaction>
</comment>
<comment type="catalytic activity">
    <reaction evidence="1">
        <text>gamma-carotene = all-trans-beta-carotene</text>
        <dbReference type="Rhea" id="RHEA:32239"/>
        <dbReference type="ChEBI" id="CHEBI:17579"/>
        <dbReference type="ChEBI" id="CHEBI:27740"/>
        <dbReference type="EC" id="5.5.1.19"/>
    </reaction>
</comment>
<comment type="catalytic activity">
    <reaction evidence="1">
        <text>2 (2E,6E,10E)-geranylgeranyl diphosphate = 15-cis-phytoene + 2 diphosphate</text>
        <dbReference type="Rhea" id="RHEA:34475"/>
        <dbReference type="ChEBI" id="CHEBI:27787"/>
        <dbReference type="ChEBI" id="CHEBI:33019"/>
        <dbReference type="ChEBI" id="CHEBI:58756"/>
        <dbReference type="EC" id="2.5.1.32"/>
    </reaction>
</comment>
<comment type="pathway">
    <text evidence="1">Carotenoid biosynthesis; beta-carotene biosynthesis.</text>
</comment>
<comment type="pathway">
    <text evidence="1">Carotenoid biosynthesis; phytoene biosynthesis; all-trans-phytoene from geranylgeranyl diphosphate: step 1/1.</text>
</comment>
<comment type="subcellular location">
    <subcellularLocation>
        <location evidence="3">Membrane</location>
        <topology evidence="3">Multi-pass membrane protein</topology>
    </subcellularLocation>
</comment>
<comment type="similarity">
    <text evidence="3">In the N-terminal section; belongs to the lycopene beta-cyclase family.</text>
</comment>
<comment type="similarity">
    <text evidence="3">In the C-terminal section; belongs to the phytoene/squalene synthase family.</text>
</comment>
<protein>
    <recommendedName>
        <fullName evidence="1">Bifunctional lycopene cyclase/phytoene synthase</fullName>
    </recommendedName>
    <domain>
        <recommendedName>
            <fullName evidence="1">Lycopene beta-cyclase</fullName>
            <ecNumber evidence="1">5.5.1.19</ecNumber>
        </recommendedName>
        <alternativeName>
            <fullName evidence="1">Lycopene cyclase</fullName>
        </alternativeName>
    </domain>
    <domain>
        <recommendedName>
            <fullName evidence="1">Phytoene synthase</fullName>
            <ecNumber evidence="1">2.5.1.32</ecNumber>
        </recommendedName>
    </domain>
</protein>
<name>LCPS_PODAN</name>
<dbReference type="EC" id="5.5.1.19" evidence="1"/>
<dbReference type="EC" id="2.5.1.32" evidence="1"/>
<dbReference type="EMBL" id="CU633899">
    <property type="protein sequence ID" value="CAP67633.1"/>
    <property type="molecule type" value="Genomic_DNA"/>
</dbReference>
<dbReference type="EMBL" id="FO904936">
    <property type="protein sequence ID" value="CDP23892.1"/>
    <property type="molecule type" value="Genomic_DNA"/>
</dbReference>
<dbReference type="RefSeq" id="XP_001906962.1">
    <property type="nucleotide sequence ID" value="XM_001906927.1"/>
</dbReference>
<dbReference type="SMR" id="B2ATB0"/>
<dbReference type="STRING" id="515849.B2ATB0"/>
<dbReference type="GeneID" id="6191495"/>
<dbReference type="KEGG" id="pan:PODANSg3995"/>
<dbReference type="VEuPathDB" id="FungiDB:PODANS_1_15240"/>
<dbReference type="eggNOG" id="KOG1459">
    <property type="taxonomic scope" value="Eukaryota"/>
</dbReference>
<dbReference type="HOGENOM" id="CLU_012965_0_0_1"/>
<dbReference type="InParanoid" id="B2ATB0"/>
<dbReference type="OrthoDB" id="6600518at2759"/>
<dbReference type="UniPathway" id="UPA00799">
    <property type="reaction ID" value="UER00773"/>
</dbReference>
<dbReference type="UniPathway" id="UPA00802"/>
<dbReference type="Proteomes" id="UP000001197">
    <property type="component" value="Chromosome 1"/>
</dbReference>
<dbReference type="GO" id="GO:0016020">
    <property type="term" value="C:membrane"/>
    <property type="evidence" value="ECO:0007669"/>
    <property type="project" value="UniProtKB-SubCell"/>
</dbReference>
<dbReference type="GO" id="GO:0004311">
    <property type="term" value="F:geranylgeranyl diphosphate synthase activity"/>
    <property type="evidence" value="ECO:0007669"/>
    <property type="project" value="InterPro"/>
</dbReference>
<dbReference type="GO" id="GO:0016872">
    <property type="term" value="F:intramolecular lyase activity"/>
    <property type="evidence" value="ECO:0007669"/>
    <property type="project" value="InterPro"/>
</dbReference>
<dbReference type="GO" id="GO:0045436">
    <property type="term" value="F:lycopene beta cyclase activity"/>
    <property type="evidence" value="ECO:0007669"/>
    <property type="project" value="RHEA"/>
</dbReference>
<dbReference type="GO" id="GO:0051996">
    <property type="term" value="F:squalene synthase [NAD(P)H] activity"/>
    <property type="evidence" value="ECO:0007669"/>
    <property type="project" value="InterPro"/>
</dbReference>
<dbReference type="GO" id="GO:0016117">
    <property type="term" value="P:carotenoid biosynthetic process"/>
    <property type="evidence" value="ECO:0007669"/>
    <property type="project" value="UniProtKB-KW"/>
</dbReference>
<dbReference type="CDD" id="cd00683">
    <property type="entry name" value="Trans_IPPS_HH"/>
    <property type="match status" value="1"/>
</dbReference>
<dbReference type="Gene3D" id="1.10.600.10">
    <property type="entry name" value="Farnesyl Diphosphate Synthase"/>
    <property type="match status" value="1"/>
</dbReference>
<dbReference type="InterPro" id="IPR008949">
    <property type="entry name" value="Isoprenoid_synthase_dom_sf"/>
</dbReference>
<dbReference type="InterPro" id="IPR017825">
    <property type="entry name" value="Lycopene_cyclase_dom"/>
</dbReference>
<dbReference type="InterPro" id="IPR002060">
    <property type="entry name" value="Squ/phyt_synthse"/>
</dbReference>
<dbReference type="InterPro" id="IPR019845">
    <property type="entry name" value="Squalene/phytoene_synthase_CS"/>
</dbReference>
<dbReference type="InterPro" id="IPR044843">
    <property type="entry name" value="Trans_IPPS_bact-type"/>
</dbReference>
<dbReference type="InterPro" id="IPR033904">
    <property type="entry name" value="Trans_IPPS_HH"/>
</dbReference>
<dbReference type="NCBIfam" id="TIGR03462">
    <property type="entry name" value="CarR_dom_SF"/>
    <property type="match status" value="2"/>
</dbReference>
<dbReference type="PANTHER" id="PTHR31480">
    <property type="entry name" value="BIFUNCTIONAL LYCOPENE CYCLASE/PHYTOENE SYNTHASE"/>
    <property type="match status" value="1"/>
</dbReference>
<dbReference type="Pfam" id="PF00494">
    <property type="entry name" value="SQS_PSY"/>
    <property type="match status" value="1"/>
</dbReference>
<dbReference type="SFLD" id="SFLDS00005">
    <property type="entry name" value="Isoprenoid_Synthase_Type_I"/>
    <property type="match status" value="1"/>
</dbReference>
<dbReference type="SFLD" id="SFLDG01212">
    <property type="entry name" value="Phytoene_synthase_like"/>
    <property type="match status" value="1"/>
</dbReference>
<dbReference type="SUPFAM" id="SSF48576">
    <property type="entry name" value="Terpenoid synthases"/>
    <property type="match status" value="1"/>
</dbReference>
<dbReference type="PROSITE" id="PS01045">
    <property type="entry name" value="SQUALEN_PHYTOEN_SYN_2"/>
    <property type="match status" value="1"/>
</dbReference>